<keyword id="KW-0030">Aminoacyl-tRNA synthetase</keyword>
<keyword id="KW-0067">ATP-binding</keyword>
<keyword id="KW-0963">Cytoplasm</keyword>
<keyword id="KW-0436">Ligase</keyword>
<keyword id="KW-0547">Nucleotide-binding</keyword>
<keyword id="KW-0648">Protein biosynthesis</keyword>
<feature type="chain" id="PRO_1000059052" description="Glycine--tRNA ligase alpha subunit">
    <location>
        <begin position="1"/>
        <end position="303"/>
    </location>
</feature>
<gene>
    <name evidence="1" type="primary">glyQ</name>
    <name type="ordered locus">EcHS_A3762</name>
</gene>
<dbReference type="EC" id="6.1.1.14" evidence="1"/>
<dbReference type="EMBL" id="CP000802">
    <property type="protein sequence ID" value="ABV07971.1"/>
    <property type="molecule type" value="Genomic_DNA"/>
</dbReference>
<dbReference type="RefSeq" id="WP_001168544.1">
    <property type="nucleotide sequence ID" value="NC_009800.1"/>
</dbReference>
<dbReference type="SMR" id="A8A617"/>
<dbReference type="GeneID" id="93778290"/>
<dbReference type="KEGG" id="ecx:EcHS_A3762"/>
<dbReference type="HOGENOM" id="CLU_057066_1_0_6"/>
<dbReference type="GO" id="GO:0005829">
    <property type="term" value="C:cytosol"/>
    <property type="evidence" value="ECO:0007669"/>
    <property type="project" value="TreeGrafter"/>
</dbReference>
<dbReference type="GO" id="GO:0005524">
    <property type="term" value="F:ATP binding"/>
    <property type="evidence" value="ECO:0007669"/>
    <property type="project" value="UniProtKB-UniRule"/>
</dbReference>
<dbReference type="GO" id="GO:0004820">
    <property type="term" value="F:glycine-tRNA ligase activity"/>
    <property type="evidence" value="ECO:0007669"/>
    <property type="project" value="UniProtKB-UniRule"/>
</dbReference>
<dbReference type="GO" id="GO:0006426">
    <property type="term" value="P:glycyl-tRNA aminoacylation"/>
    <property type="evidence" value="ECO:0007669"/>
    <property type="project" value="UniProtKB-UniRule"/>
</dbReference>
<dbReference type="CDD" id="cd00733">
    <property type="entry name" value="GlyRS_alpha_core"/>
    <property type="match status" value="1"/>
</dbReference>
<dbReference type="FunFam" id="1.20.58.180:FF:000001">
    <property type="entry name" value="Glycine--tRNA ligase alpha subunit"/>
    <property type="match status" value="1"/>
</dbReference>
<dbReference type="FunFam" id="3.30.930.10:FF:000006">
    <property type="entry name" value="Glycine--tRNA ligase alpha subunit"/>
    <property type="match status" value="1"/>
</dbReference>
<dbReference type="Gene3D" id="3.30.930.10">
    <property type="entry name" value="Bira Bifunctional Protein, Domain 2"/>
    <property type="match status" value="1"/>
</dbReference>
<dbReference type="Gene3D" id="1.20.58.180">
    <property type="entry name" value="Class II aaRS and biotin synthetases, domain 2"/>
    <property type="match status" value="1"/>
</dbReference>
<dbReference type="HAMAP" id="MF_00254">
    <property type="entry name" value="Gly_tRNA_synth_alpha"/>
    <property type="match status" value="1"/>
</dbReference>
<dbReference type="InterPro" id="IPR045864">
    <property type="entry name" value="aa-tRNA-synth_II/BPL/LPL"/>
</dbReference>
<dbReference type="InterPro" id="IPR006194">
    <property type="entry name" value="Gly-tRNA-synth_heterodimer"/>
</dbReference>
<dbReference type="InterPro" id="IPR002310">
    <property type="entry name" value="Gly-tRNA_ligase_asu"/>
</dbReference>
<dbReference type="NCBIfam" id="TIGR00388">
    <property type="entry name" value="glyQ"/>
    <property type="match status" value="1"/>
</dbReference>
<dbReference type="NCBIfam" id="NF006827">
    <property type="entry name" value="PRK09348.1"/>
    <property type="match status" value="1"/>
</dbReference>
<dbReference type="PANTHER" id="PTHR30075:SF2">
    <property type="entry name" value="GLYCINE--TRNA LIGASE, CHLOROPLASTIC_MITOCHONDRIAL 2"/>
    <property type="match status" value="1"/>
</dbReference>
<dbReference type="PANTHER" id="PTHR30075">
    <property type="entry name" value="GLYCYL-TRNA SYNTHETASE"/>
    <property type="match status" value="1"/>
</dbReference>
<dbReference type="Pfam" id="PF02091">
    <property type="entry name" value="tRNA-synt_2e"/>
    <property type="match status" value="1"/>
</dbReference>
<dbReference type="PRINTS" id="PR01044">
    <property type="entry name" value="TRNASYNTHGA"/>
</dbReference>
<dbReference type="SUPFAM" id="SSF55681">
    <property type="entry name" value="Class II aaRS and biotin synthetases"/>
    <property type="match status" value="1"/>
</dbReference>
<dbReference type="PROSITE" id="PS50861">
    <property type="entry name" value="AA_TRNA_LIGASE_II_GLYAB"/>
    <property type="match status" value="1"/>
</dbReference>
<organism>
    <name type="scientific">Escherichia coli O9:H4 (strain HS)</name>
    <dbReference type="NCBI Taxonomy" id="331112"/>
    <lineage>
        <taxon>Bacteria</taxon>
        <taxon>Pseudomonadati</taxon>
        <taxon>Pseudomonadota</taxon>
        <taxon>Gammaproteobacteria</taxon>
        <taxon>Enterobacterales</taxon>
        <taxon>Enterobacteriaceae</taxon>
        <taxon>Escherichia</taxon>
    </lineage>
</organism>
<protein>
    <recommendedName>
        <fullName evidence="1">Glycine--tRNA ligase alpha subunit</fullName>
        <ecNumber evidence="1">6.1.1.14</ecNumber>
    </recommendedName>
    <alternativeName>
        <fullName evidence="1">Glycyl-tRNA synthetase alpha subunit</fullName>
        <shortName evidence="1">GlyRS</shortName>
    </alternativeName>
</protein>
<evidence type="ECO:0000255" key="1">
    <source>
        <dbReference type="HAMAP-Rule" id="MF_00254"/>
    </source>
</evidence>
<proteinExistence type="inferred from homology"/>
<accession>A8A617</accession>
<name>SYGA_ECOHS</name>
<reference key="1">
    <citation type="journal article" date="2008" name="J. Bacteriol.">
        <title>The pangenome structure of Escherichia coli: comparative genomic analysis of E. coli commensal and pathogenic isolates.</title>
        <authorList>
            <person name="Rasko D.A."/>
            <person name="Rosovitz M.J."/>
            <person name="Myers G.S.A."/>
            <person name="Mongodin E.F."/>
            <person name="Fricke W.F."/>
            <person name="Gajer P."/>
            <person name="Crabtree J."/>
            <person name="Sebaihia M."/>
            <person name="Thomson N.R."/>
            <person name="Chaudhuri R."/>
            <person name="Henderson I.R."/>
            <person name="Sperandio V."/>
            <person name="Ravel J."/>
        </authorList>
    </citation>
    <scope>NUCLEOTIDE SEQUENCE [LARGE SCALE GENOMIC DNA]</scope>
    <source>
        <strain>HS</strain>
    </source>
</reference>
<sequence>MQKFDTRTFQGLILTLQDYWARQGCTIVQPLDMEVGAGTSHPMTCLRALGPEPMAAAYVQPSRRPTDGRYGENPNRLQHYYQFQVVIKPSPDNIQELYLGSLKELGMDPTIHDIRFVEDNWENPTLGAWGLGWEVWLNGMEVTQFTYFQQVGGLECKPVTGEITYGLERLAMYIQGVDSVYDLVWSDGPLGKTTYGDVFHQNEVEQSTYNFEYADVDFLFTCFEQYEKEAQQLLALENPLPLPAYERILKAAHSFNLLDARKAISVTERQRYILRIRTLTKAVAEAYYASREALGFPMCNKDK</sequence>
<comment type="catalytic activity">
    <reaction evidence="1">
        <text>tRNA(Gly) + glycine + ATP = glycyl-tRNA(Gly) + AMP + diphosphate</text>
        <dbReference type="Rhea" id="RHEA:16013"/>
        <dbReference type="Rhea" id="RHEA-COMP:9664"/>
        <dbReference type="Rhea" id="RHEA-COMP:9683"/>
        <dbReference type="ChEBI" id="CHEBI:30616"/>
        <dbReference type="ChEBI" id="CHEBI:33019"/>
        <dbReference type="ChEBI" id="CHEBI:57305"/>
        <dbReference type="ChEBI" id="CHEBI:78442"/>
        <dbReference type="ChEBI" id="CHEBI:78522"/>
        <dbReference type="ChEBI" id="CHEBI:456215"/>
        <dbReference type="EC" id="6.1.1.14"/>
    </reaction>
</comment>
<comment type="subunit">
    <text evidence="1">Tetramer of two alpha and two beta subunits.</text>
</comment>
<comment type="subcellular location">
    <subcellularLocation>
        <location evidence="1">Cytoplasm</location>
    </subcellularLocation>
</comment>
<comment type="similarity">
    <text evidence="1">Belongs to the class-II aminoacyl-tRNA synthetase family.</text>
</comment>